<comment type="function">
    <text evidence="1">Catalyzes the decarboxylation of orotidine 5'-monophosphate (OMP) to uridine 5'-monophosphate (UMP).</text>
</comment>
<comment type="catalytic activity">
    <reaction evidence="1">
        <text>orotidine 5'-phosphate + H(+) = UMP + CO2</text>
        <dbReference type="Rhea" id="RHEA:11596"/>
        <dbReference type="ChEBI" id="CHEBI:15378"/>
        <dbReference type="ChEBI" id="CHEBI:16526"/>
        <dbReference type="ChEBI" id="CHEBI:57538"/>
        <dbReference type="ChEBI" id="CHEBI:57865"/>
        <dbReference type="EC" id="4.1.1.23"/>
    </reaction>
</comment>
<comment type="pathway">
    <text evidence="1">Pyrimidine metabolism; UMP biosynthesis via de novo pathway; UMP from orotate: step 2/2.</text>
</comment>
<comment type="subunit">
    <text evidence="1">Homodimer.</text>
</comment>
<comment type="similarity">
    <text evidence="1">Belongs to the OMP decarboxylase family. Type 1 subfamily.</text>
</comment>
<keyword id="KW-0210">Decarboxylase</keyword>
<keyword id="KW-0456">Lyase</keyword>
<keyword id="KW-0665">Pyrimidine biosynthesis</keyword>
<dbReference type="EC" id="4.1.1.23" evidence="1"/>
<dbReference type="EMBL" id="AE017198">
    <property type="protein sequence ID" value="AAS09103.1"/>
    <property type="molecule type" value="Genomic_DNA"/>
</dbReference>
<dbReference type="RefSeq" id="WP_011162109.1">
    <property type="nucleotide sequence ID" value="NC_005362.1"/>
</dbReference>
<dbReference type="SMR" id="Q74J28"/>
<dbReference type="GeneID" id="83570288"/>
<dbReference type="KEGG" id="ljo:LJ_1282"/>
<dbReference type="PATRIC" id="fig|257314.6.peg.1150"/>
<dbReference type="eggNOG" id="COG0284">
    <property type="taxonomic scope" value="Bacteria"/>
</dbReference>
<dbReference type="HOGENOM" id="CLU_067069_1_1_9"/>
<dbReference type="UniPathway" id="UPA00070">
    <property type="reaction ID" value="UER00120"/>
</dbReference>
<dbReference type="Proteomes" id="UP000000581">
    <property type="component" value="Chromosome"/>
</dbReference>
<dbReference type="GO" id="GO:0005829">
    <property type="term" value="C:cytosol"/>
    <property type="evidence" value="ECO:0007669"/>
    <property type="project" value="TreeGrafter"/>
</dbReference>
<dbReference type="GO" id="GO:0004590">
    <property type="term" value="F:orotidine-5'-phosphate decarboxylase activity"/>
    <property type="evidence" value="ECO:0007669"/>
    <property type="project" value="UniProtKB-UniRule"/>
</dbReference>
<dbReference type="GO" id="GO:0006207">
    <property type="term" value="P:'de novo' pyrimidine nucleobase biosynthetic process"/>
    <property type="evidence" value="ECO:0007669"/>
    <property type="project" value="InterPro"/>
</dbReference>
<dbReference type="GO" id="GO:0044205">
    <property type="term" value="P:'de novo' UMP biosynthetic process"/>
    <property type="evidence" value="ECO:0007669"/>
    <property type="project" value="UniProtKB-UniRule"/>
</dbReference>
<dbReference type="CDD" id="cd04725">
    <property type="entry name" value="OMP_decarboxylase_like"/>
    <property type="match status" value="1"/>
</dbReference>
<dbReference type="FunFam" id="3.20.20.70:FF:000015">
    <property type="entry name" value="Orotidine 5'-phosphate decarboxylase"/>
    <property type="match status" value="1"/>
</dbReference>
<dbReference type="Gene3D" id="3.20.20.70">
    <property type="entry name" value="Aldolase class I"/>
    <property type="match status" value="1"/>
</dbReference>
<dbReference type="HAMAP" id="MF_01200_B">
    <property type="entry name" value="OMPdecase_type1_B"/>
    <property type="match status" value="1"/>
</dbReference>
<dbReference type="InterPro" id="IPR013785">
    <property type="entry name" value="Aldolase_TIM"/>
</dbReference>
<dbReference type="InterPro" id="IPR014732">
    <property type="entry name" value="OMPdecase"/>
</dbReference>
<dbReference type="InterPro" id="IPR018089">
    <property type="entry name" value="OMPdecase_AS"/>
</dbReference>
<dbReference type="InterPro" id="IPR047596">
    <property type="entry name" value="OMPdecase_bac"/>
</dbReference>
<dbReference type="InterPro" id="IPR001754">
    <property type="entry name" value="OMPdeCOase_dom"/>
</dbReference>
<dbReference type="InterPro" id="IPR011060">
    <property type="entry name" value="RibuloseP-bd_barrel"/>
</dbReference>
<dbReference type="NCBIfam" id="NF001273">
    <property type="entry name" value="PRK00230.1"/>
    <property type="match status" value="1"/>
</dbReference>
<dbReference type="NCBIfam" id="TIGR01740">
    <property type="entry name" value="pyrF"/>
    <property type="match status" value="1"/>
</dbReference>
<dbReference type="PANTHER" id="PTHR32119">
    <property type="entry name" value="OROTIDINE 5'-PHOSPHATE DECARBOXYLASE"/>
    <property type="match status" value="1"/>
</dbReference>
<dbReference type="PANTHER" id="PTHR32119:SF2">
    <property type="entry name" value="OROTIDINE 5'-PHOSPHATE DECARBOXYLASE"/>
    <property type="match status" value="1"/>
</dbReference>
<dbReference type="Pfam" id="PF00215">
    <property type="entry name" value="OMPdecase"/>
    <property type="match status" value="1"/>
</dbReference>
<dbReference type="SMART" id="SM00934">
    <property type="entry name" value="OMPdecase"/>
    <property type="match status" value="1"/>
</dbReference>
<dbReference type="SUPFAM" id="SSF51366">
    <property type="entry name" value="Ribulose-phoshate binding barrel"/>
    <property type="match status" value="1"/>
</dbReference>
<dbReference type="PROSITE" id="PS00156">
    <property type="entry name" value="OMPDECASE"/>
    <property type="match status" value="1"/>
</dbReference>
<feature type="chain" id="PRO_0000241869" description="Orotidine 5'-phosphate decarboxylase">
    <location>
        <begin position="1"/>
        <end position="235"/>
    </location>
</feature>
<feature type="active site" description="Proton donor" evidence="1">
    <location>
        <position position="62"/>
    </location>
</feature>
<feature type="binding site" evidence="1">
    <location>
        <position position="10"/>
    </location>
    <ligand>
        <name>substrate</name>
    </ligand>
</feature>
<feature type="binding site" evidence="1">
    <location>
        <position position="33"/>
    </location>
    <ligand>
        <name>substrate</name>
    </ligand>
</feature>
<feature type="binding site" evidence="1">
    <location>
        <begin position="60"/>
        <end position="69"/>
    </location>
    <ligand>
        <name>substrate</name>
    </ligand>
</feature>
<feature type="binding site" evidence="1">
    <location>
        <position position="123"/>
    </location>
    <ligand>
        <name>substrate</name>
    </ligand>
</feature>
<feature type="binding site" evidence="1">
    <location>
        <position position="185"/>
    </location>
    <ligand>
        <name>substrate</name>
    </ligand>
</feature>
<feature type="binding site" evidence="1">
    <location>
        <position position="194"/>
    </location>
    <ligand>
        <name>substrate</name>
    </ligand>
</feature>
<feature type="binding site" evidence="1">
    <location>
        <position position="214"/>
    </location>
    <ligand>
        <name>substrate</name>
    </ligand>
</feature>
<feature type="binding site" evidence="1">
    <location>
        <position position="215"/>
    </location>
    <ligand>
        <name>substrate</name>
    </ligand>
</feature>
<protein>
    <recommendedName>
        <fullName evidence="1">Orotidine 5'-phosphate decarboxylase</fullName>
        <ecNumber evidence="1">4.1.1.23</ecNumber>
    </recommendedName>
    <alternativeName>
        <fullName evidence="1">OMP decarboxylase</fullName>
        <shortName evidence="1">OMPDCase</shortName>
        <shortName evidence="1">OMPdecase</shortName>
    </alternativeName>
</protein>
<evidence type="ECO:0000255" key="1">
    <source>
        <dbReference type="HAMAP-Rule" id="MF_01200"/>
    </source>
</evidence>
<organism>
    <name type="scientific">Lactobacillus johnsonii (strain CNCM I-12250 / La1 / NCC 533)</name>
    <dbReference type="NCBI Taxonomy" id="257314"/>
    <lineage>
        <taxon>Bacteria</taxon>
        <taxon>Bacillati</taxon>
        <taxon>Bacillota</taxon>
        <taxon>Bacilli</taxon>
        <taxon>Lactobacillales</taxon>
        <taxon>Lactobacillaceae</taxon>
        <taxon>Lactobacillus</taxon>
    </lineage>
</organism>
<accession>Q74J28</accession>
<proteinExistence type="inferred from homology"/>
<reference key="1">
    <citation type="journal article" date="2004" name="Proc. Natl. Acad. Sci. U.S.A.">
        <title>The genome sequence of the probiotic intestinal bacterium Lactobacillus johnsonii NCC 533.</title>
        <authorList>
            <person name="Pridmore R.D."/>
            <person name="Berger B."/>
            <person name="Desiere F."/>
            <person name="Vilanova D."/>
            <person name="Barretto C."/>
            <person name="Pittet A.-C."/>
            <person name="Zwahlen M.-C."/>
            <person name="Rouvet M."/>
            <person name="Altermann E."/>
            <person name="Barrangou R."/>
            <person name="Mollet B."/>
            <person name="Mercenier A."/>
            <person name="Klaenhammer T."/>
            <person name="Arigoni F."/>
            <person name="Schell M.A."/>
        </authorList>
    </citation>
    <scope>NUCLEOTIDE SEQUENCE [LARGE SCALE GENOMIC DNA]</scope>
    <source>
        <strain>CNCM I-1225 / La1 / NCC 533</strain>
    </source>
</reference>
<gene>
    <name evidence="1" type="primary">pyrF</name>
    <name type="ordered locus">LJ_1282</name>
</gene>
<sequence length="235" mass="25551">MSRPVIVALDLDNEKKLNELLPKLGKPENVFIKIGMELFFNEGPKIVKQLSEQGYQIFLDLKMNDIPNTVYNGAKALARLGITYTTVHALGGSQMIKAAKDGLIAGTPIDKNVPKLLAVTELTSISDEILHYEQNCNLSMNDQVLSLATTAKKAGADGVICSPLEVKDLRQKVGEDFLYVTPGIRPAGNAKDDQSRVATPLQAKEWGSTAIVVGRPITLATDPEAAYEAIKKEFN</sequence>
<name>PYRF_LACJO</name>